<sequence length="349" mass="39092">MIAFDQLTWLHGKPQSSGLLKANPEDFLVVEDLGFAPDGEGEHVLVRILKNGCNTRFVADALAKFLKIHAREVSFAGQKDKHAVTEQWLCARVPGKEMPDLSKFQLEGCQVLEYARHKRKLRLGALKGNQFTVILREISHRQDVETRLQAIAERGVPNYFGAQRFGIGGSNLQGALRWAESDAPVRDRNKRSFWLSAARSALFNQQVSIRLKKTEFNQVVDGDALQLAGRGSWFVVTPEELEVSQARVHNRELMITAALPGSGDWGSQRDALAAEQAAIAEETSLQALLVREKVEAARRAMLLYPQQLSWNWWDDVTVELRFWLPAGSFATSVVRELINTTGDYANIAE</sequence>
<comment type="function">
    <text evidence="1">Responsible for synthesis of pseudouridine from uracil-13 in transfer RNAs.</text>
</comment>
<comment type="catalytic activity">
    <reaction evidence="1">
        <text>uridine(13) in tRNA = pseudouridine(13) in tRNA</text>
        <dbReference type="Rhea" id="RHEA:42540"/>
        <dbReference type="Rhea" id="RHEA-COMP:10105"/>
        <dbReference type="Rhea" id="RHEA-COMP:10106"/>
        <dbReference type="ChEBI" id="CHEBI:65314"/>
        <dbReference type="ChEBI" id="CHEBI:65315"/>
        <dbReference type="EC" id="5.4.99.27"/>
    </reaction>
</comment>
<comment type="similarity">
    <text evidence="1">Belongs to the pseudouridine synthase TruD family.</text>
</comment>
<name>TRUD_KLEP3</name>
<dbReference type="EC" id="5.4.99.27" evidence="1"/>
<dbReference type="EMBL" id="CP000964">
    <property type="protein sequence ID" value="ACI09111.1"/>
    <property type="molecule type" value="Genomic_DNA"/>
</dbReference>
<dbReference type="SMR" id="B5XV36"/>
<dbReference type="KEGG" id="kpe:KPK_1016"/>
<dbReference type="HOGENOM" id="CLU_005281_4_0_6"/>
<dbReference type="Proteomes" id="UP000001734">
    <property type="component" value="Chromosome"/>
</dbReference>
<dbReference type="GO" id="GO:0005829">
    <property type="term" value="C:cytosol"/>
    <property type="evidence" value="ECO:0007669"/>
    <property type="project" value="TreeGrafter"/>
</dbReference>
<dbReference type="GO" id="GO:0003723">
    <property type="term" value="F:RNA binding"/>
    <property type="evidence" value="ECO:0007669"/>
    <property type="project" value="InterPro"/>
</dbReference>
<dbReference type="GO" id="GO:0160150">
    <property type="term" value="F:tRNA pseudouridine(13) synthase activity"/>
    <property type="evidence" value="ECO:0007669"/>
    <property type="project" value="UniProtKB-EC"/>
</dbReference>
<dbReference type="GO" id="GO:0031119">
    <property type="term" value="P:tRNA pseudouridine synthesis"/>
    <property type="evidence" value="ECO:0007669"/>
    <property type="project" value="UniProtKB-UniRule"/>
</dbReference>
<dbReference type="CDD" id="cd02575">
    <property type="entry name" value="PseudoU_synth_EcTruD"/>
    <property type="match status" value="1"/>
</dbReference>
<dbReference type="FunFam" id="3.30.2340.10:FF:000001">
    <property type="entry name" value="tRNA pseudouridine synthase D"/>
    <property type="match status" value="1"/>
</dbReference>
<dbReference type="FunFam" id="3.30.2350.20:FF:000001">
    <property type="entry name" value="tRNA pseudouridine synthase D"/>
    <property type="match status" value="1"/>
</dbReference>
<dbReference type="Gene3D" id="3.30.2350.20">
    <property type="entry name" value="TruD, catalytic domain"/>
    <property type="match status" value="1"/>
</dbReference>
<dbReference type="Gene3D" id="3.30.2340.10">
    <property type="entry name" value="TruD, insertion domain"/>
    <property type="match status" value="1"/>
</dbReference>
<dbReference type="HAMAP" id="MF_01082">
    <property type="entry name" value="TruD"/>
    <property type="match status" value="1"/>
</dbReference>
<dbReference type="InterPro" id="IPR020103">
    <property type="entry name" value="PsdUridine_synth_cat_dom_sf"/>
</dbReference>
<dbReference type="InterPro" id="IPR001656">
    <property type="entry name" value="PsdUridine_synth_TruD"/>
</dbReference>
<dbReference type="InterPro" id="IPR020119">
    <property type="entry name" value="PsdUridine_synth_TruD_CS"/>
</dbReference>
<dbReference type="InterPro" id="IPR011760">
    <property type="entry name" value="PsdUridine_synth_TruD_insert"/>
</dbReference>
<dbReference type="InterPro" id="IPR042214">
    <property type="entry name" value="TruD_catalytic"/>
</dbReference>
<dbReference type="InterPro" id="IPR043165">
    <property type="entry name" value="TruD_insert_sf"/>
</dbReference>
<dbReference type="InterPro" id="IPR050170">
    <property type="entry name" value="TruD_pseudoU_synthase"/>
</dbReference>
<dbReference type="NCBIfam" id="NF002155">
    <property type="entry name" value="PRK00984.1-4"/>
    <property type="match status" value="1"/>
</dbReference>
<dbReference type="NCBIfam" id="TIGR00094">
    <property type="entry name" value="tRNA_TruD_broad"/>
    <property type="match status" value="1"/>
</dbReference>
<dbReference type="PANTHER" id="PTHR47811">
    <property type="entry name" value="TRNA PSEUDOURIDINE SYNTHASE D"/>
    <property type="match status" value="1"/>
</dbReference>
<dbReference type="PANTHER" id="PTHR47811:SF1">
    <property type="entry name" value="TRNA PSEUDOURIDINE SYNTHASE D"/>
    <property type="match status" value="1"/>
</dbReference>
<dbReference type="Pfam" id="PF01142">
    <property type="entry name" value="TruD"/>
    <property type="match status" value="2"/>
</dbReference>
<dbReference type="SUPFAM" id="SSF55120">
    <property type="entry name" value="Pseudouridine synthase"/>
    <property type="match status" value="1"/>
</dbReference>
<dbReference type="PROSITE" id="PS50984">
    <property type="entry name" value="TRUD"/>
    <property type="match status" value="1"/>
</dbReference>
<dbReference type="PROSITE" id="PS01268">
    <property type="entry name" value="UPF0024"/>
    <property type="match status" value="1"/>
</dbReference>
<reference key="1">
    <citation type="journal article" date="2008" name="PLoS Genet.">
        <title>Complete genome sequence of the N2-fixing broad host range endophyte Klebsiella pneumoniae 342 and virulence predictions verified in mice.</title>
        <authorList>
            <person name="Fouts D.E."/>
            <person name="Tyler H.L."/>
            <person name="DeBoy R.T."/>
            <person name="Daugherty S."/>
            <person name="Ren Q."/>
            <person name="Badger J.H."/>
            <person name="Durkin A.S."/>
            <person name="Huot H."/>
            <person name="Shrivastava S."/>
            <person name="Kothari S."/>
            <person name="Dodson R.J."/>
            <person name="Mohamoud Y."/>
            <person name="Khouri H."/>
            <person name="Roesch L.F.W."/>
            <person name="Krogfelt K.A."/>
            <person name="Struve C."/>
            <person name="Triplett E.W."/>
            <person name="Methe B.A."/>
        </authorList>
    </citation>
    <scope>NUCLEOTIDE SEQUENCE [LARGE SCALE GENOMIC DNA]</scope>
    <source>
        <strain>342</strain>
    </source>
</reference>
<keyword id="KW-0413">Isomerase</keyword>
<keyword id="KW-0819">tRNA processing</keyword>
<proteinExistence type="inferred from homology"/>
<accession>B5XV36</accession>
<gene>
    <name evidence="1" type="primary">truD</name>
    <name type="ordered locus">KPK_1016</name>
</gene>
<organism>
    <name type="scientific">Klebsiella pneumoniae (strain 342)</name>
    <dbReference type="NCBI Taxonomy" id="507522"/>
    <lineage>
        <taxon>Bacteria</taxon>
        <taxon>Pseudomonadati</taxon>
        <taxon>Pseudomonadota</taxon>
        <taxon>Gammaproteobacteria</taxon>
        <taxon>Enterobacterales</taxon>
        <taxon>Enterobacteriaceae</taxon>
        <taxon>Klebsiella/Raoultella group</taxon>
        <taxon>Klebsiella</taxon>
        <taxon>Klebsiella pneumoniae complex</taxon>
    </lineage>
</organism>
<feature type="chain" id="PRO_1000136843" description="tRNA pseudouridine synthase D">
    <location>
        <begin position="1"/>
        <end position="349"/>
    </location>
</feature>
<feature type="domain" description="TRUD" evidence="1">
    <location>
        <begin position="155"/>
        <end position="303"/>
    </location>
</feature>
<feature type="active site" description="Nucleophile" evidence="1">
    <location>
        <position position="80"/>
    </location>
</feature>
<feature type="binding site" evidence="1">
    <location>
        <position position="27"/>
    </location>
    <ligand>
        <name>substrate</name>
    </ligand>
</feature>
<feature type="binding site" evidence="1">
    <location>
        <position position="129"/>
    </location>
    <ligand>
        <name>substrate</name>
    </ligand>
</feature>
<feature type="binding site" evidence="1">
    <location>
        <position position="329"/>
    </location>
    <ligand>
        <name>substrate</name>
    </ligand>
</feature>
<evidence type="ECO:0000255" key="1">
    <source>
        <dbReference type="HAMAP-Rule" id="MF_01082"/>
    </source>
</evidence>
<protein>
    <recommendedName>
        <fullName evidence="1">tRNA pseudouridine synthase D</fullName>
        <ecNumber evidence="1">5.4.99.27</ecNumber>
    </recommendedName>
    <alternativeName>
        <fullName evidence="1">tRNA pseudouridine(13) synthase</fullName>
    </alternativeName>
    <alternativeName>
        <fullName evidence="1">tRNA pseudouridylate synthase D</fullName>
    </alternativeName>
    <alternativeName>
        <fullName evidence="1">tRNA-uridine isomerase D</fullName>
    </alternativeName>
</protein>